<reference key="1">
    <citation type="journal article" date="2005" name="Science">
        <title>The transcriptional landscape of the mammalian genome.</title>
        <authorList>
            <person name="Carninci P."/>
            <person name="Kasukawa T."/>
            <person name="Katayama S."/>
            <person name="Gough J."/>
            <person name="Frith M.C."/>
            <person name="Maeda N."/>
            <person name="Oyama R."/>
            <person name="Ravasi T."/>
            <person name="Lenhard B."/>
            <person name="Wells C."/>
            <person name="Kodzius R."/>
            <person name="Shimokawa K."/>
            <person name="Bajic V.B."/>
            <person name="Brenner S.E."/>
            <person name="Batalov S."/>
            <person name="Forrest A.R."/>
            <person name="Zavolan M."/>
            <person name="Davis M.J."/>
            <person name="Wilming L.G."/>
            <person name="Aidinis V."/>
            <person name="Allen J.E."/>
            <person name="Ambesi-Impiombato A."/>
            <person name="Apweiler R."/>
            <person name="Aturaliya R.N."/>
            <person name="Bailey T.L."/>
            <person name="Bansal M."/>
            <person name="Baxter L."/>
            <person name="Beisel K.W."/>
            <person name="Bersano T."/>
            <person name="Bono H."/>
            <person name="Chalk A.M."/>
            <person name="Chiu K.P."/>
            <person name="Choudhary V."/>
            <person name="Christoffels A."/>
            <person name="Clutterbuck D.R."/>
            <person name="Crowe M.L."/>
            <person name="Dalla E."/>
            <person name="Dalrymple B.P."/>
            <person name="de Bono B."/>
            <person name="Della Gatta G."/>
            <person name="di Bernardo D."/>
            <person name="Down T."/>
            <person name="Engstrom P."/>
            <person name="Fagiolini M."/>
            <person name="Faulkner G."/>
            <person name="Fletcher C.F."/>
            <person name="Fukushima T."/>
            <person name="Furuno M."/>
            <person name="Futaki S."/>
            <person name="Gariboldi M."/>
            <person name="Georgii-Hemming P."/>
            <person name="Gingeras T.R."/>
            <person name="Gojobori T."/>
            <person name="Green R.E."/>
            <person name="Gustincich S."/>
            <person name="Harbers M."/>
            <person name="Hayashi Y."/>
            <person name="Hensch T.K."/>
            <person name="Hirokawa N."/>
            <person name="Hill D."/>
            <person name="Huminiecki L."/>
            <person name="Iacono M."/>
            <person name="Ikeo K."/>
            <person name="Iwama A."/>
            <person name="Ishikawa T."/>
            <person name="Jakt M."/>
            <person name="Kanapin A."/>
            <person name="Katoh M."/>
            <person name="Kawasawa Y."/>
            <person name="Kelso J."/>
            <person name="Kitamura H."/>
            <person name="Kitano H."/>
            <person name="Kollias G."/>
            <person name="Krishnan S.P."/>
            <person name="Kruger A."/>
            <person name="Kummerfeld S.K."/>
            <person name="Kurochkin I.V."/>
            <person name="Lareau L.F."/>
            <person name="Lazarevic D."/>
            <person name="Lipovich L."/>
            <person name="Liu J."/>
            <person name="Liuni S."/>
            <person name="McWilliam S."/>
            <person name="Madan Babu M."/>
            <person name="Madera M."/>
            <person name="Marchionni L."/>
            <person name="Matsuda H."/>
            <person name="Matsuzawa S."/>
            <person name="Miki H."/>
            <person name="Mignone F."/>
            <person name="Miyake S."/>
            <person name="Morris K."/>
            <person name="Mottagui-Tabar S."/>
            <person name="Mulder N."/>
            <person name="Nakano N."/>
            <person name="Nakauchi H."/>
            <person name="Ng P."/>
            <person name="Nilsson R."/>
            <person name="Nishiguchi S."/>
            <person name="Nishikawa S."/>
            <person name="Nori F."/>
            <person name="Ohara O."/>
            <person name="Okazaki Y."/>
            <person name="Orlando V."/>
            <person name="Pang K.C."/>
            <person name="Pavan W.J."/>
            <person name="Pavesi G."/>
            <person name="Pesole G."/>
            <person name="Petrovsky N."/>
            <person name="Piazza S."/>
            <person name="Reed J."/>
            <person name="Reid J.F."/>
            <person name="Ring B.Z."/>
            <person name="Ringwald M."/>
            <person name="Rost B."/>
            <person name="Ruan Y."/>
            <person name="Salzberg S.L."/>
            <person name="Sandelin A."/>
            <person name="Schneider C."/>
            <person name="Schoenbach C."/>
            <person name="Sekiguchi K."/>
            <person name="Semple C.A."/>
            <person name="Seno S."/>
            <person name="Sessa L."/>
            <person name="Sheng Y."/>
            <person name="Shibata Y."/>
            <person name="Shimada H."/>
            <person name="Shimada K."/>
            <person name="Silva D."/>
            <person name="Sinclair B."/>
            <person name="Sperling S."/>
            <person name="Stupka E."/>
            <person name="Sugiura K."/>
            <person name="Sultana R."/>
            <person name="Takenaka Y."/>
            <person name="Taki K."/>
            <person name="Tammoja K."/>
            <person name="Tan S.L."/>
            <person name="Tang S."/>
            <person name="Taylor M.S."/>
            <person name="Tegner J."/>
            <person name="Teichmann S.A."/>
            <person name="Ueda H.R."/>
            <person name="van Nimwegen E."/>
            <person name="Verardo R."/>
            <person name="Wei C.L."/>
            <person name="Yagi K."/>
            <person name="Yamanishi H."/>
            <person name="Zabarovsky E."/>
            <person name="Zhu S."/>
            <person name="Zimmer A."/>
            <person name="Hide W."/>
            <person name="Bult C."/>
            <person name="Grimmond S.M."/>
            <person name="Teasdale R.D."/>
            <person name="Liu E.T."/>
            <person name="Brusic V."/>
            <person name="Quackenbush J."/>
            <person name="Wahlestedt C."/>
            <person name="Mattick J.S."/>
            <person name="Hume D.A."/>
            <person name="Kai C."/>
            <person name="Sasaki D."/>
            <person name="Tomaru Y."/>
            <person name="Fukuda S."/>
            <person name="Kanamori-Katayama M."/>
            <person name="Suzuki M."/>
            <person name="Aoki J."/>
            <person name="Arakawa T."/>
            <person name="Iida J."/>
            <person name="Imamura K."/>
            <person name="Itoh M."/>
            <person name="Kato T."/>
            <person name="Kawaji H."/>
            <person name="Kawagashira N."/>
            <person name="Kawashima T."/>
            <person name="Kojima M."/>
            <person name="Kondo S."/>
            <person name="Konno H."/>
            <person name="Nakano K."/>
            <person name="Ninomiya N."/>
            <person name="Nishio T."/>
            <person name="Okada M."/>
            <person name="Plessy C."/>
            <person name="Shibata K."/>
            <person name="Shiraki T."/>
            <person name="Suzuki S."/>
            <person name="Tagami M."/>
            <person name="Waki K."/>
            <person name="Watahiki A."/>
            <person name="Okamura-Oho Y."/>
            <person name="Suzuki H."/>
            <person name="Kawai J."/>
            <person name="Hayashizaki Y."/>
        </authorList>
    </citation>
    <scope>NUCLEOTIDE SEQUENCE [LARGE SCALE MRNA]</scope>
    <source>
        <strain>C57BL/6J</strain>
        <tissue>Testis</tissue>
    </source>
</reference>
<reference key="2">
    <citation type="journal article" date="2004" name="Genome Res.">
        <title>The status, quality, and expansion of the NIH full-length cDNA project: the Mammalian Gene Collection (MGC).</title>
        <authorList>
            <consortium name="The MGC Project Team"/>
        </authorList>
    </citation>
    <scope>NUCLEOTIDE SEQUENCE [LARGE SCALE MRNA]</scope>
    <source>
        <tissue>Testis</tissue>
    </source>
</reference>
<reference key="3">
    <citation type="journal article" date="2007" name="Biochim. Biophys. Acta">
        <title>Cysteine-string protein isoform beta (Cspbeta) is targeted to the trans-Golgi network as a non-palmitoylated CSP in clonal beta-cells.</title>
        <authorList>
            <person name="Boal F."/>
            <person name="Le Pevelen S."/>
            <person name="Cziepluch C."/>
            <person name="Scotti P."/>
            <person name="Lang J."/>
        </authorList>
    </citation>
    <scope>INTERACTION WITH HSC70 AND SGTA</scope>
</reference>
<feature type="chain" id="PRO_0000071056" description="DnaJ homolog subfamily C member 5B">
    <location>
        <begin position="1"/>
        <end position="199"/>
    </location>
</feature>
<feature type="domain" description="J" evidence="3">
    <location>
        <begin position="19"/>
        <end position="84"/>
    </location>
</feature>
<feature type="modified residue" description="Phosphoserine" evidence="2">
    <location>
        <position position="14"/>
    </location>
</feature>
<feature type="modified residue" description="Phosphoserine" evidence="2">
    <location>
        <position position="16"/>
    </location>
</feature>
<feature type="sequence conflict" description="In Ref. 2; AAH49579." evidence="6" ref="2">
    <original>K</original>
    <variation>R</variation>
    <location>
        <position position="111"/>
    </location>
</feature>
<name>DNJ5B_MOUSE</name>
<dbReference type="EMBL" id="AK005749">
    <property type="protein sequence ID" value="BAB24221.1"/>
    <property type="molecule type" value="mRNA"/>
</dbReference>
<dbReference type="EMBL" id="AK005725">
    <property type="protein sequence ID" value="BAB24206.1"/>
    <property type="molecule type" value="mRNA"/>
</dbReference>
<dbReference type="EMBL" id="BC049579">
    <property type="protein sequence ID" value="AAH49579.1"/>
    <property type="molecule type" value="mRNA"/>
</dbReference>
<dbReference type="CCDS" id="CCDS17257.1"/>
<dbReference type="RefSeq" id="NP_001157008.1">
    <property type="nucleotide sequence ID" value="NM_001163536.2"/>
</dbReference>
<dbReference type="RefSeq" id="NP_001157009.1">
    <property type="nucleotide sequence ID" value="NM_001163537.2"/>
</dbReference>
<dbReference type="RefSeq" id="NP_079765.3">
    <property type="nucleotide sequence ID" value="NM_025489.3"/>
</dbReference>
<dbReference type="RefSeq" id="XP_006535578.1">
    <property type="nucleotide sequence ID" value="XM_006535515.1"/>
</dbReference>
<dbReference type="RefSeq" id="XP_006535579.1">
    <property type="nucleotide sequence ID" value="XM_006535516.1"/>
</dbReference>
<dbReference type="SMR" id="Q9CQ94"/>
<dbReference type="CORUM" id="Q9CQ94"/>
<dbReference type="FunCoup" id="Q9CQ94">
    <property type="interactions" value="190"/>
</dbReference>
<dbReference type="STRING" id="10090.ENSMUSP00000113414"/>
<dbReference type="iPTMnet" id="Q9CQ94"/>
<dbReference type="PhosphoSitePlus" id="Q9CQ94"/>
<dbReference type="SwissPalm" id="Q9CQ94"/>
<dbReference type="PaxDb" id="10090-ENSMUSP00000029132"/>
<dbReference type="ProteomicsDB" id="279560"/>
<dbReference type="Antibodypedia" id="24804">
    <property type="antibodies" value="82 antibodies from 16 providers"/>
</dbReference>
<dbReference type="DNASU" id="66326"/>
<dbReference type="Ensembl" id="ENSMUST00000029132.11">
    <property type="protein sequence ID" value="ENSMUSP00000029132.5"/>
    <property type="gene ID" value="ENSMUSG00000027606.13"/>
</dbReference>
<dbReference type="Ensembl" id="ENSMUST00000118735.8">
    <property type="protein sequence ID" value="ENSMUSP00000113414.2"/>
    <property type="gene ID" value="ENSMUSG00000027606.13"/>
</dbReference>
<dbReference type="Ensembl" id="ENSMUST00000118968.8">
    <property type="protein sequence ID" value="ENSMUSP00000112849.2"/>
    <property type="gene ID" value="ENSMUSG00000027606.13"/>
</dbReference>
<dbReference type="Ensembl" id="ENSMUST00000165693.2">
    <property type="protein sequence ID" value="ENSMUSP00000127515.2"/>
    <property type="gene ID" value="ENSMUSG00000027606.13"/>
</dbReference>
<dbReference type="GeneID" id="66326"/>
<dbReference type="KEGG" id="mmu:66326"/>
<dbReference type="UCSC" id="uc008orv.2">
    <property type="organism name" value="mouse"/>
</dbReference>
<dbReference type="AGR" id="MGI:1913576"/>
<dbReference type="CTD" id="85479"/>
<dbReference type="MGI" id="MGI:1913576">
    <property type="gene designation" value="Dnajc5b"/>
</dbReference>
<dbReference type="VEuPathDB" id="HostDB:ENSMUSG00000027606"/>
<dbReference type="eggNOG" id="KOG0716">
    <property type="taxonomic scope" value="Eukaryota"/>
</dbReference>
<dbReference type="GeneTree" id="ENSGT00940000159294"/>
<dbReference type="HOGENOM" id="CLU_017633_14_1_1"/>
<dbReference type="InParanoid" id="Q9CQ94"/>
<dbReference type="OMA" id="EINKAHT"/>
<dbReference type="OrthoDB" id="445556at2759"/>
<dbReference type="PhylomeDB" id="Q9CQ94"/>
<dbReference type="TreeFam" id="TF105164"/>
<dbReference type="BioGRID-ORCS" id="66326">
    <property type="hits" value="0 hits in 80 CRISPR screens"/>
</dbReference>
<dbReference type="ChiTaRS" id="Dnajc5b">
    <property type="organism name" value="mouse"/>
</dbReference>
<dbReference type="PRO" id="PR:Q9CQ94"/>
<dbReference type="Proteomes" id="UP000000589">
    <property type="component" value="Chromosome 3"/>
</dbReference>
<dbReference type="RNAct" id="Q9CQ94">
    <property type="molecule type" value="protein"/>
</dbReference>
<dbReference type="Bgee" id="ENSMUSG00000027606">
    <property type="expression patterns" value="Expressed in seminiferous tubule of testis and 20 other cell types or tissues"/>
</dbReference>
<dbReference type="GO" id="GO:0005737">
    <property type="term" value="C:cytoplasm"/>
    <property type="evidence" value="ECO:0007669"/>
    <property type="project" value="UniProtKB-ARBA"/>
</dbReference>
<dbReference type="GO" id="GO:0016020">
    <property type="term" value="C:membrane"/>
    <property type="evidence" value="ECO:0007669"/>
    <property type="project" value="UniProtKB-SubCell"/>
</dbReference>
<dbReference type="CDD" id="cd06257">
    <property type="entry name" value="DnaJ"/>
    <property type="match status" value="1"/>
</dbReference>
<dbReference type="FunFam" id="1.10.287.110:FF:000017">
    <property type="entry name" value="dnaJ homolog subfamily C member 5"/>
    <property type="match status" value="1"/>
</dbReference>
<dbReference type="Gene3D" id="1.10.287.110">
    <property type="entry name" value="DnaJ domain"/>
    <property type="match status" value="1"/>
</dbReference>
<dbReference type="InterPro" id="IPR051434">
    <property type="entry name" value="DnaJ_C_subfamily_member5"/>
</dbReference>
<dbReference type="InterPro" id="IPR001623">
    <property type="entry name" value="DnaJ_domain"/>
</dbReference>
<dbReference type="InterPro" id="IPR036869">
    <property type="entry name" value="J_dom_sf"/>
</dbReference>
<dbReference type="PANTHER" id="PTHR44027">
    <property type="entry name" value="DNAJ HOMOLOG SUBFAMILY C MEMBER 5 HOMOLOG"/>
    <property type="match status" value="1"/>
</dbReference>
<dbReference type="PANTHER" id="PTHR44027:SF6">
    <property type="entry name" value="DNAJ HOMOLOG SUBFAMILY C MEMBER 5B"/>
    <property type="match status" value="1"/>
</dbReference>
<dbReference type="Pfam" id="PF00226">
    <property type="entry name" value="DnaJ"/>
    <property type="match status" value="1"/>
</dbReference>
<dbReference type="PRINTS" id="PR00625">
    <property type="entry name" value="JDOMAIN"/>
</dbReference>
<dbReference type="SMART" id="SM00271">
    <property type="entry name" value="DnaJ"/>
    <property type="match status" value="1"/>
</dbReference>
<dbReference type="SUPFAM" id="SSF46565">
    <property type="entry name" value="Chaperone J-domain"/>
    <property type="match status" value="1"/>
</dbReference>
<dbReference type="PROSITE" id="PS50076">
    <property type="entry name" value="DNAJ_2"/>
    <property type="match status" value="1"/>
</dbReference>
<proteinExistence type="evidence at protein level"/>
<protein>
    <recommendedName>
        <fullName>DnaJ homolog subfamily C member 5B</fullName>
    </recommendedName>
    <alternativeName>
        <fullName evidence="5">Cysteine-string protein isoform beta</fullName>
        <shortName evidence="5">CSP-beta</shortName>
    </alternativeName>
</protein>
<accession>Q9CQ94</accession>
<accession>Q810R9</accession>
<organism>
    <name type="scientific">Mus musculus</name>
    <name type="common">Mouse</name>
    <dbReference type="NCBI Taxonomy" id="10090"/>
    <lineage>
        <taxon>Eukaryota</taxon>
        <taxon>Metazoa</taxon>
        <taxon>Chordata</taxon>
        <taxon>Craniata</taxon>
        <taxon>Vertebrata</taxon>
        <taxon>Euteleostomi</taxon>
        <taxon>Mammalia</taxon>
        <taxon>Eutheria</taxon>
        <taxon>Euarchontoglires</taxon>
        <taxon>Glires</taxon>
        <taxon>Rodentia</taxon>
        <taxon>Myomorpha</taxon>
        <taxon>Muroidea</taxon>
        <taxon>Muridae</taxon>
        <taxon>Murinae</taxon>
        <taxon>Mus</taxon>
        <taxon>Mus</taxon>
    </lineage>
</organism>
<sequence>MACNAPNQRQRTLSTSGESLYEILGLHKGASCEEIKKTYRKLALRHHPDKNPDDPSAAEKFKEINNAHTILTDTSKRNIYDKYGSLGLYVAEQFGDENVNTYFMLSSWWAKTLFIIIGLLTGCYFCCCLCCCCNCCCGHCRPKSSTPEEEFYVSPEDLEEQIRTDMEKDMDFPVVLQPTNTNEKTQLIREGSRSYCTDS</sequence>
<gene>
    <name type="primary">Dnajc5b</name>
    <name evidence="5" type="synonym">Cspbeta</name>
</gene>
<comment type="subunit">
    <text evidence="4">Interacts with the chaperone complex consisting of HSC70 and SGTA.</text>
</comment>
<comment type="subcellular location">
    <subcellularLocation>
        <location evidence="1">Membrane</location>
        <topology evidence="1">Lipid-anchor</topology>
    </subcellularLocation>
</comment>
<comment type="PTM">
    <text evidence="1">Palmitoylated.</text>
</comment>
<evidence type="ECO:0000250" key="1"/>
<evidence type="ECO:0000250" key="2">
    <source>
        <dbReference type="UniProtKB" id="D3ZD82"/>
    </source>
</evidence>
<evidence type="ECO:0000255" key="3">
    <source>
        <dbReference type="PROSITE-ProRule" id="PRU00286"/>
    </source>
</evidence>
<evidence type="ECO:0000269" key="4">
    <source>
    </source>
</evidence>
<evidence type="ECO:0000303" key="5">
    <source>
    </source>
</evidence>
<evidence type="ECO:0000305" key="6"/>
<keyword id="KW-0143">Chaperone</keyword>
<keyword id="KW-0449">Lipoprotein</keyword>
<keyword id="KW-0472">Membrane</keyword>
<keyword id="KW-0564">Palmitate</keyword>
<keyword id="KW-0597">Phosphoprotein</keyword>
<keyword id="KW-1185">Reference proteome</keyword>